<reference key="1">
    <citation type="submission" date="2007-03" db="EMBL/GenBank/DDBJ databases">
        <authorList>
            <person name="Heidelberg J."/>
        </authorList>
    </citation>
    <scope>NUCLEOTIDE SEQUENCE [LARGE SCALE GENOMIC DNA]</scope>
    <source>
        <strain>ATCC 39541 / Classical Ogawa 395 / O395</strain>
    </source>
</reference>
<reference key="2">
    <citation type="journal article" date="2008" name="PLoS ONE">
        <title>A recalibrated molecular clock and independent origins for the cholera pandemic clones.</title>
        <authorList>
            <person name="Feng L."/>
            <person name="Reeves P.R."/>
            <person name="Lan R."/>
            <person name="Ren Y."/>
            <person name="Gao C."/>
            <person name="Zhou Z."/>
            <person name="Ren Y."/>
            <person name="Cheng J."/>
            <person name="Wang W."/>
            <person name="Wang J."/>
            <person name="Qian W."/>
            <person name="Li D."/>
            <person name="Wang L."/>
        </authorList>
    </citation>
    <scope>NUCLEOTIDE SEQUENCE [LARGE SCALE GENOMIC DNA]</scope>
    <source>
        <strain>ATCC 39541 / Classical Ogawa 395 / O395</strain>
    </source>
</reference>
<reference key="3">
    <citation type="journal article" date="2002" name="Biochemistry">
        <title>Purification and characterization of the recombinant Na(+)-translocating NADH:quinone oxidoreductase from Vibrio cholerae.</title>
        <authorList>
            <person name="Barquera B."/>
            <person name="Hellwig P."/>
            <person name="Zhou W."/>
            <person name="Morgan J.E."/>
            <person name="Haese C.C."/>
            <person name="Gosink K.K."/>
            <person name="Nilges M."/>
            <person name="Bruesehoff P.J."/>
            <person name="Roth A."/>
            <person name="Lancaster C.R."/>
            <person name="Gennis R.B."/>
        </authorList>
    </citation>
    <scope>CATALYTIC ACTIVITY</scope>
    <scope>SUBUNIT</scope>
    <source>
        <strain>ATCC 39541 / Classical Ogawa 395 / O395</strain>
    </source>
</reference>
<reference key="4">
    <citation type="journal article" date="2010" name="J. Biol. Chem.">
        <title>Localization and function of the membrane-bound riboflavin in the Na+-translocating NADH:quinone oxidoreductase (Na+-NQR) from Vibrio cholerae.</title>
        <authorList>
            <person name="Casutt M.S."/>
            <person name="Huber T."/>
            <person name="Brunisholz R."/>
            <person name="Tao M."/>
            <person name="Fritz G."/>
            <person name="Steuber J."/>
        </authorList>
    </citation>
    <scope>SUBUNIT</scope>
    <source>
        <strain>ATCC 39541 / Classical Ogawa 395 / O395</strain>
    </source>
</reference>
<dbReference type="EC" id="7.2.1.1" evidence="1 2"/>
<dbReference type="EMBL" id="CP000627">
    <property type="protein sequence ID" value="ABQ20722.1"/>
    <property type="status" value="ALT_INIT"/>
    <property type="molecule type" value="Genomic_DNA"/>
</dbReference>
<dbReference type="EMBL" id="CP001235">
    <property type="protein sequence ID" value="ACP10401.1"/>
    <property type="status" value="ALT_INIT"/>
    <property type="molecule type" value="Genomic_DNA"/>
</dbReference>
<dbReference type="RefSeq" id="WP_001906078.1">
    <property type="nucleotide sequence ID" value="NZ_JAACZH010000008.1"/>
</dbReference>
<dbReference type="PDB" id="7XK3">
    <property type="method" value="EM"/>
    <property type="resolution" value="3.10 A"/>
    <property type="chains" value="A=1-446"/>
</dbReference>
<dbReference type="PDB" id="7XK4">
    <property type="method" value="EM"/>
    <property type="resolution" value="3.10 A"/>
    <property type="chains" value="A=1-446"/>
</dbReference>
<dbReference type="PDB" id="7XK5">
    <property type="method" value="EM"/>
    <property type="resolution" value="3.10 A"/>
    <property type="chains" value="A=1-446"/>
</dbReference>
<dbReference type="PDB" id="7XK6">
    <property type="method" value="EM"/>
    <property type="resolution" value="3.00 A"/>
    <property type="chains" value="A=1-446"/>
</dbReference>
<dbReference type="PDB" id="7XK7">
    <property type="method" value="EM"/>
    <property type="resolution" value="2.90 A"/>
    <property type="chains" value="A=1-446"/>
</dbReference>
<dbReference type="PDB" id="8A1T">
    <property type="method" value="EM"/>
    <property type="resolution" value="3.37 A"/>
    <property type="chains" value="A=1-446"/>
</dbReference>
<dbReference type="PDB" id="8A1V">
    <property type="method" value="EM"/>
    <property type="resolution" value="2.73 A"/>
    <property type="chains" value="A=1-446"/>
</dbReference>
<dbReference type="PDB" id="8A1W">
    <property type="method" value="EM"/>
    <property type="resolution" value="2.56 A"/>
    <property type="chains" value="A=1-446"/>
</dbReference>
<dbReference type="PDB" id="8A1X">
    <property type="method" value="EM"/>
    <property type="resolution" value="3.20 A"/>
    <property type="chains" value="A=1-446"/>
</dbReference>
<dbReference type="PDB" id="8A1Y">
    <property type="method" value="EM"/>
    <property type="resolution" value="3.30 A"/>
    <property type="chains" value="A=1-446"/>
</dbReference>
<dbReference type="PDB" id="8ACW">
    <property type="method" value="X-ray"/>
    <property type="resolution" value="3.40 A"/>
    <property type="chains" value="A=1-446"/>
</dbReference>
<dbReference type="PDB" id="8AD0">
    <property type="method" value="X-ray"/>
    <property type="resolution" value="3.11 A"/>
    <property type="chains" value="A=1-446"/>
</dbReference>
<dbReference type="PDB" id="8EW3">
    <property type="method" value="EM"/>
    <property type="resolution" value="2.65 A"/>
    <property type="chains" value="A=1-446"/>
</dbReference>
<dbReference type="PDBsum" id="7XK3"/>
<dbReference type="PDBsum" id="7XK4"/>
<dbReference type="PDBsum" id="7XK5"/>
<dbReference type="PDBsum" id="7XK6"/>
<dbReference type="PDBsum" id="7XK7"/>
<dbReference type="PDBsum" id="8A1T"/>
<dbReference type="PDBsum" id="8A1V"/>
<dbReference type="PDBsum" id="8A1W"/>
<dbReference type="PDBsum" id="8A1X"/>
<dbReference type="PDBsum" id="8A1Y"/>
<dbReference type="PDBsum" id="8ACW"/>
<dbReference type="PDBsum" id="8AD0"/>
<dbReference type="PDBsum" id="8EW3"/>
<dbReference type="EMDB" id="EMD-33242"/>
<dbReference type="EMDB" id="EMD-33243"/>
<dbReference type="EMDB" id="EMD-33244"/>
<dbReference type="EMDB" id="EMD-33245"/>
<dbReference type="EMDB" id="EMD-33246"/>
<dbReference type="SMR" id="A5F5X1"/>
<dbReference type="KEGG" id="vco:VC0395_A1884"/>
<dbReference type="KEGG" id="vcr:VC395_2411"/>
<dbReference type="PATRIC" id="fig|345073.21.peg.2324"/>
<dbReference type="eggNOG" id="COG1726">
    <property type="taxonomic scope" value="Bacteria"/>
</dbReference>
<dbReference type="HOGENOM" id="CLU_046656_0_0_6"/>
<dbReference type="OrthoDB" id="9774536at2"/>
<dbReference type="BRENDA" id="7.2.1.1">
    <property type="organism ID" value="15862"/>
</dbReference>
<dbReference type="Proteomes" id="UP000000249">
    <property type="component" value="Chromosome 2"/>
</dbReference>
<dbReference type="GO" id="GO:0016655">
    <property type="term" value="F:oxidoreductase activity, acting on NAD(P)H, quinone or similar compound as acceptor"/>
    <property type="evidence" value="ECO:0000314"/>
    <property type="project" value="UniProtKB"/>
</dbReference>
<dbReference type="GO" id="GO:0006814">
    <property type="term" value="P:sodium ion transport"/>
    <property type="evidence" value="ECO:0000314"/>
    <property type="project" value="UniProtKB"/>
</dbReference>
<dbReference type="HAMAP" id="MF_00425">
    <property type="entry name" value="NqrA"/>
    <property type="match status" value="1"/>
</dbReference>
<dbReference type="InterPro" id="IPR008703">
    <property type="entry name" value="NqrA"/>
</dbReference>
<dbReference type="InterPro" id="IPR056148">
    <property type="entry name" value="NQRA_2nd"/>
</dbReference>
<dbReference type="InterPro" id="IPR022615">
    <property type="entry name" value="NqrA_C_domain"/>
</dbReference>
<dbReference type="InterPro" id="IPR056147">
    <property type="entry name" value="NQRA_N"/>
</dbReference>
<dbReference type="NCBIfam" id="TIGR01936">
    <property type="entry name" value="nqrA"/>
    <property type="match status" value="1"/>
</dbReference>
<dbReference type="NCBIfam" id="NF003759">
    <property type="entry name" value="PRK05352.1-2"/>
    <property type="match status" value="1"/>
</dbReference>
<dbReference type="PANTHER" id="PTHR37839">
    <property type="entry name" value="NA(+)-TRANSLOCATING NADH-QUINONE REDUCTASE SUBUNIT A"/>
    <property type="match status" value="1"/>
</dbReference>
<dbReference type="PANTHER" id="PTHR37839:SF1">
    <property type="entry name" value="NA(+)-TRANSLOCATING NADH-QUINONE REDUCTASE SUBUNIT A"/>
    <property type="match status" value="1"/>
</dbReference>
<dbReference type="Pfam" id="PF24836">
    <property type="entry name" value="NQRA_2nd"/>
    <property type="match status" value="1"/>
</dbReference>
<dbReference type="Pfam" id="PF05896">
    <property type="entry name" value="NQRA_N"/>
    <property type="match status" value="1"/>
</dbReference>
<dbReference type="Pfam" id="PF11973">
    <property type="entry name" value="NQRA_SLBB"/>
    <property type="match status" value="1"/>
</dbReference>
<accession>A5F5X1</accession>
<proteinExistence type="evidence at protein level"/>
<name>NQRA_VIBC3</name>
<comment type="function">
    <text evidence="1">NQR complex catalyzes the reduction of ubiquinone-1 to ubiquinol by two successive reactions, coupled with the transport of Na(+) ions from the cytoplasm to the periplasm. NqrA to NqrE are probably involved in the second step, the conversion of ubisemiquinone to ubiquinol.</text>
</comment>
<comment type="catalytic activity">
    <reaction evidence="1 2">
        <text>a ubiquinone + n Na(+)(in) + NADH + H(+) = a ubiquinol + n Na(+)(out) + NAD(+)</text>
        <dbReference type="Rhea" id="RHEA:47748"/>
        <dbReference type="Rhea" id="RHEA-COMP:9565"/>
        <dbReference type="Rhea" id="RHEA-COMP:9566"/>
        <dbReference type="ChEBI" id="CHEBI:15378"/>
        <dbReference type="ChEBI" id="CHEBI:16389"/>
        <dbReference type="ChEBI" id="CHEBI:17976"/>
        <dbReference type="ChEBI" id="CHEBI:29101"/>
        <dbReference type="ChEBI" id="CHEBI:57540"/>
        <dbReference type="ChEBI" id="CHEBI:57945"/>
        <dbReference type="EC" id="7.2.1.1"/>
    </reaction>
</comment>
<comment type="subunit">
    <text evidence="1 2 3">Composed of six subunits; NqrA, NqrB, NqrC, NqrD, NqrE and NqrF.</text>
</comment>
<comment type="similarity">
    <text evidence="1 5">Belongs to the NqrA family.</text>
</comment>
<comment type="sequence caution" evidence="5">
    <conflict type="erroneous initiation">
        <sequence resource="EMBL-CDS" id="ABQ20722"/>
    </conflict>
    <text>Extended N-terminus.</text>
</comment>
<comment type="sequence caution" evidence="5">
    <conflict type="erroneous initiation">
        <sequence resource="EMBL-CDS" id="ACP10401"/>
    </conflict>
    <text>Extended N-terminus.</text>
</comment>
<keyword id="KW-0002">3D-structure</keyword>
<keyword id="KW-0406">Ion transport</keyword>
<keyword id="KW-0520">NAD</keyword>
<keyword id="KW-0915">Sodium</keyword>
<keyword id="KW-0739">Sodium transport</keyword>
<keyword id="KW-1278">Translocase</keyword>
<keyword id="KW-0813">Transport</keyword>
<keyword id="KW-0830">Ubiquinone</keyword>
<gene>
    <name evidence="1 4" type="primary">nqrA</name>
    <name evidence="6" type="ordered locus">VC0395_A1884</name>
    <name evidence="7" type="ordered locus">VC395_2411</name>
</gene>
<feature type="chain" id="PRO_0000431654" description="Na(+)-translocating NADH-quinone reductase subunit A">
    <location>
        <begin position="1"/>
        <end position="446"/>
    </location>
</feature>
<feature type="strand" evidence="10">
    <location>
        <begin position="1"/>
        <end position="3"/>
    </location>
</feature>
<feature type="strand" evidence="10">
    <location>
        <begin position="12"/>
        <end position="14"/>
    </location>
</feature>
<feature type="strand" evidence="9">
    <location>
        <begin position="20"/>
        <end position="22"/>
    </location>
</feature>
<feature type="strand" evidence="9">
    <location>
        <begin position="28"/>
        <end position="32"/>
    </location>
</feature>
<feature type="helix" evidence="9">
    <location>
        <begin position="33"/>
        <end position="35"/>
    </location>
</feature>
<feature type="strand" evidence="9">
    <location>
        <begin position="41"/>
        <end position="43"/>
    </location>
</feature>
<feature type="strand" evidence="9">
    <location>
        <begin position="56"/>
        <end position="60"/>
    </location>
</feature>
<feature type="strand" evidence="9">
    <location>
        <begin position="67"/>
        <end position="69"/>
    </location>
</feature>
<feature type="strand" evidence="9">
    <location>
        <begin position="74"/>
        <end position="81"/>
    </location>
</feature>
<feature type="helix" evidence="9">
    <location>
        <begin position="83"/>
        <end position="85"/>
    </location>
</feature>
<feature type="strand" evidence="9">
    <location>
        <begin position="87"/>
        <end position="94"/>
    </location>
</feature>
<feature type="turn" evidence="9">
    <location>
        <begin position="107"/>
        <end position="109"/>
    </location>
</feature>
<feature type="helix" evidence="9">
    <location>
        <begin position="110"/>
        <end position="112"/>
    </location>
</feature>
<feature type="helix" evidence="9">
    <location>
        <begin position="115"/>
        <end position="124"/>
    </location>
</feature>
<feature type="helix" evidence="9">
    <location>
        <begin position="127"/>
        <end position="130"/>
    </location>
</feature>
<feature type="strand" evidence="9">
    <location>
        <begin position="132"/>
        <end position="134"/>
    </location>
</feature>
<feature type="turn" evidence="9">
    <location>
        <begin position="135"/>
        <end position="137"/>
    </location>
</feature>
<feature type="strand" evidence="9">
    <location>
        <begin position="147"/>
        <end position="153"/>
    </location>
</feature>
<feature type="helix" evidence="9">
    <location>
        <begin position="163"/>
        <end position="169"/>
    </location>
</feature>
<feature type="helix" evidence="9">
    <location>
        <begin position="171"/>
        <end position="184"/>
    </location>
</feature>
<feature type="strand" evidence="9">
    <location>
        <begin position="186"/>
        <end position="193"/>
    </location>
</feature>
<feature type="strand" evidence="9">
    <location>
        <begin position="206"/>
        <end position="214"/>
    </location>
</feature>
<feature type="turn" evidence="9">
    <location>
        <begin position="215"/>
        <end position="218"/>
    </location>
</feature>
<feature type="helix" evidence="9">
    <location>
        <begin position="220"/>
        <end position="227"/>
    </location>
</feature>
<feature type="strand" evidence="10">
    <location>
        <begin position="232"/>
        <end position="234"/>
    </location>
</feature>
<feature type="strand" evidence="9">
    <location>
        <begin position="236"/>
        <end position="240"/>
    </location>
</feature>
<feature type="helix" evidence="9">
    <location>
        <begin position="241"/>
        <end position="253"/>
    </location>
</feature>
<feature type="strand" evidence="9">
    <location>
        <begin position="259"/>
        <end position="266"/>
    </location>
</feature>
<feature type="strand" evidence="9">
    <location>
        <begin position="269"/>
        <end position="271"/>
    </location>
</feature>
<feature type="strand" evidence="9">
    <location>
        <begin position="273"/>
        <end position="278"/>
    </location>
</feature>
<feature type="helix" evidence="9">
    <location>
        <begin position="283"/>
        <end position="286"/>
    </location>
</feature>
<feature type="turn" evidence="8">
    <location>
        <begin position="287"/>
        <end position="289"/>
    </location>
</feature>
<feature type="strand" evidence="9">
    <location>
        <begin position="296"/>
        <end position="301"/>
    </location>
</feature>
<feature type="strand" evidence="9">
    <location>
        <begin position="303"/>
        <end position="308"/>
    </location>
</feature>
<feature type="helix" evidence="9">
    <location>
        <begin position="311"/>
        <end position="313"/>
    </location>
</feature>
<feature type="strand" evidence="9">
    <location>
        <begin position="322"/>
        <end position="327"/>
    </location>
</feature>
<feature type="helix" evidence="9">
    <location>
        <begin position="336"/>
        <end position="338"/>
    </location>
</feature>
<feature type="strand" evidence="9">
    <location>
        <begin position="347"/>
        <end position="349"/>
    </location>
</feature>
<feature type="helix" evidence="9">
    <location>
        <begin position="352"/>
        <end position="355"/>
    </location>
</feature>
<feature type="strand" evidence="9">
    <location>
        <begin position="364"/>
        <end position="366"/>
    </location>
</feature>
<feature type="helix" evidence="9">
    <location>
        <begin position="379"/>
        <end position="383"/>
    </location>
</feature>
<feature type="strand" evidence="9">
    <location>
        <begin position="386"/>
        <end position="388"/>
    </location>
</feature>
<feature type="helix" evidence="9">
    <location>
        <begin position="390"/>
        <end position="399"/>
    </location>
</feature>
<feature type="helix" evidence="9">
    <location>
        <begin position="402"/>
        <end position="407"/>
    </location>
</feature>
<feature type="helix" evidence="9">
    <location>
        <begin position="410"/>
        <end position="412"/>
    </location>
</feature>
<feature type="helix" evidence="9">
    <location>
        <begin position="415"/>
        <end position="418"/>
    </location>
</feature>
<feature type="helix" evidence="9">
    <location>
        <begin position="419"/>
        <end position="423"/>
    </location>
</feature>
<feature type="helix" evidence="9">
    <location>
        <begin position="431"/>
        <end position="445"/>
    </location>
</feature>
<protein>
    <recommendedName>
        <fullName evidence="1">Na(+)-translocating NADH-quinone reductase subunit A</fullName>
        <shortName evidence="1">Na(+)-NQR subunit A</shortName>
        <shortName evidence="1">Na(+)-translocating NQR subunit A</shortName>
        <ecNumber evidence="1 2">7.2.1.1</ecNumber>
    </recommendedName>
    <alternativeName>
        <fullName evidence="1">NQR complex subunit A</fullName>
    </alternativeName>
    <alternativeName>
        <fullName evidence="1">NQR-1 subunit A</fullName>
    </alternativeName>
</protein>
<sequence length="446" mass="48624">MITIKKGLDLPIAGTPSQVISDGKAIKKVALLGEEYVGMRPTMHVRVGDEVKKAQILFEDKKNPGVKFTSPVSGKVVEINRGAKRVLQSVVIEVAGDDQVTFDKFEANQLASLNRDAIKTQLVESGLWTAFRTRPFSKVPAIDSTSEAIFVTAMDTNPLAAEPTVVINEQSEAFVAGLDVLSALTTGKVYVCKKGTSLPRSQQPNVEEHVFDGPHPAGLAGTHMHFLYPVSADHVAWSINYQDVIAVGQLFLTGELYTQRVVSLAGPVVNKPRLVRTVMGASLEQLVDSEIMPGEVRIISGSVLSGTKATGPHAYLGRYHLQVSVLREGRDKELFGWAMPGKNKFSVTRSFLGHLFKGQVYNMTTTTNGSDRSMVPIGNYEKVMPLDMEPTLLLRDLCAGDSDSAVRLGALELDEEDLALCTFVCPGKYEYGQLLRECLDKIEKEG</sequence>
<organism>
    <name type="scientific">Vibrio cholerae serotype O1 (strain ATCC 39541 / Classical Ogawa 395 / O395)</name>
    <dbReference type="NCBI Taxonomy" id="345073"/>
    <lineage>
        <taxon>Bacteria</taxon>
        <taxon>Pseudomonadati</taxon>
        <taxon>Pseudomonadota</taxon>
        <taxon>Gammaproteobacteria</taxon>
        <taxon>Vibrionales</taxon>
        <taxon>Vibrionaceae</taxon>
        <taxon>Vibrio</taxon>
    </lineage>
</organism>
<evidence type="ECO:0000255" key="1">
    <source>
        <dbReference type="HAMAP-Rule" id="MF_00425"/>
    </source>
</evidence>
<evidence type="ECO:0000269" key="2">
    <source>
    </source>
</evidence>
<evidence type="ECO:0000269" key="3">
    <source>
    </source>
</evidence>
<evidence type="ECO:0000303" key="4">
    <source>
    </source>
</evidence>
<evidence type="ECO:0000305" key="5"/>
<evidence type="ECO:0000312" key="6">
    <source>
        <dbReference type="EMBL" id="ABQ20722.1"/>
    </source>
</evidence>
<evidence type="ECO:0000312" key="7">
    <source>
        <dbReference type="EMBL" id="ACP10401.1"/>
    </source>
</evidence>
<evidence type="ECO:0007829" key="8">
    <source>
        <dbReference type="PDB" id="7XK7"/>
    </source>
</evidence>
<evidence type="ECO:0007829" key="9">
    <source>
        <dbReference type="PDB" id="8A1W"/>
    </source>
</evidence>
<evidence type="ECO:0007829" key="10">
    <source>
        <dbReference type="PDB" id="8A1Y"/>
    </source>
</evidence>